<accession>Q01470</accession>
<feature type="chain" id="PRO_0000070295" description="Phenmedipham hydrolase">
    <location>
        <begin position="1"/>
        <end position="493"/>
    </location>
</feature>
<feature type="active site" description="Acyl-ester intermediate" evidence="2">
    <location>
        <position position="188"/>
    </location>
</feature>
<feature type="active site" description="Charge relay system" evidence="1">
    <location>
        <position position="307"/>
    </location>
</feature>
<feature type="active site" description="Charge relay system" evidence="1">
    <location>
        <position position="402"/>
    </location>
</feature>
<organism>
    <name type="scientific">Pseudarthrobacter oxydans</name>
    <name type="common">Arthrobacter oxydans</name>
    <dbReference type="NCBI Taxonomy" id="1671"/>
    <lineage>
        <taxon>Bacteria</taxon>
        <taxon>Bacillati</taxon>
        <taxon>Actinomycetota</taxon>
        <taxon>Actinomycetes</taxon>
        <taxon>Micrococcales</taxon>
        <taxon>Micrococcaceae</taxon>
        <taxon>Pseudarthrobacter</taxon>
    </lineage>
</organism>
<protein>
    <recommendedName>
        <fullName>Phenmedipham hydrolase</fullName>
        <ecNumber>3.1.1.-</ecNumber>
    </recommendedName>
    <alternativeName>
        <fullName>Phenylcarbamate hydrolase</fullName>
    </alternativeName>
</protein>
<geneLocation type="plasmid">
    <name>pHP52</name>
</geneLocation>
<gene>
    <name type="primary">pcd</name>
</gene>
<comment type="function">
    <text>May degrade the phenylcarbamate herbicides phenmedipham and desmedipham cometabolically by hydrolyzing their central carbamate linkages. Conveys resistance to the herbicide phenmedipham.</text>
</comment>
<comment type="subunit">
    <text>Monomer.</text>
</comment>
<comment type="similarity">
    <text evidence="3">Belongs to the type-B carboxylesterase/lipase family.</text>
</comment>
<sequence length="493" mass="53728">MITRPIAHTTAGDLGGCLEDGLYVFRGVPYAEPPVGDLRWRAARPHAGWTGVRDASAYGPSAPQPVEPGGSPILGTHGDPPFDEDCLTLNLWTPNLDGGSRPVLVWIHGGGLLTGSGNLPNYATDTFARDGDLVGISINYRLGPLGFLAGMGDENVWLTDQVEALRWIADNVAAFGGDPNRITLVGQSGGAYSIAALAQHPVARQLFHRAILQSPPFGMQPHTVEESTARTKALARHLGHDDIEALRHEPWERLIQGTIGVLMEHTKFGEWPLAFYPVFDEATIPRHPIESIIDSDIEIIIGWTRDEGTFPFAFDPQVSQADRDQVESWLQKRFGDHAASAYEAHAGDGTSPWTVIANVVGDELFHSAGYRVADERATRRPVRAYQFDVVSPLSDGALGAVHCIEMPFTFANLDRWTGKPFVDGLDPDVVARVTNVLHQAWIAFVRTGDPTHDQLPVWPTFRADDPAVLVVGDEGAEVARDLARPDHVSVRTL</sequence>
<dbReference type="EC" id="3.1.1.-"/>
<dbReference type="EMBL" id="M94965">
    <property type="protein sequence ID" value="AAA22078.1"/>
    <property type="molecule type" value="Genomic_DNA"/>
</dbReference>
<dbReference type="PIR" id="A45737">
    <property type="entry name" value="A45737"/>
</dbReference>
<dbReference type="SMR" id="Q01470"/>
<dbReference type="ESTHER" id="artox-phhyd">
    <property type="family name" value="Carb_B_Bacteria"/>
</dbReference>
<dbReference type="GO" id="GO:0052689">
    <property type="term" value="F:carboxylic ester hydrolase activity"/>
    <property type="evidence" value="ECO:0007669"/>
    <property type="project" value="UniProtKB-KW"/>
</dbReference>
<dbReference type="GO" id="GO:0009635">
    <property type="term" value="P:response to herbicide"/>
    <property type="evidence" value="ECO:0007669"/>
    <property type="project" value="UniProtKB-KW"/>
</dbReference>
<dbReference type="CDD" id="cd00312">
    <property type="entry name" value="Esterase_lipase"/>
    <property type="match status" value="1"/>
</dbReference>
<dbReference type="Gene3D" id="3.40.50.1820">
    <property type="entry name" value="alpha/beta hydrolase"/>
    <property type="match status" value="1"/>
</dbReference>
<dbReference type="InterPro" id="IPR029058">
    <property type="entry name" value="AB_hydrolase_fold"/>
</dbReference>
<dbReference type="InterPro" id="IPR002018">
    <property type="entry name" value="CarbesteraseB"/>
</dbReference>
<dbReference type="InterPro" id="IPR019826">
    <property type="entry name" value="Carboxylesterase_B_AS"/>
</dbReference>
<dbReference type="InterPro" id="IPR019819">
    <property type="entry name" value="Carboxylesterase_B_CS"/>
</dbReference>
<dbReference type="InterPro" id="IPR050309">
    <property type="entry name" value="Type-B_Carboxylest/Lipase"/>
</dbReference>
<dbReference type="PANTHER" id="PTHR11559">
    <property type="entry name" value="CARBOXYLESTERASE"/>
    <property type="match status" value="1"/>
</dbReference>
<dbReference type="Pfam" id="PF00135">
    <property type="entry name" value="COesterase"/>
    <property type="match status" value="1"/>
</dbReference>
<dbReference type="SUPFAM" id="SSF53474">
    <property type="entry name" value="alpha/beta-Hydrolases"/>
    <property type="match status" value="1"/>
</dbReference>
<dbReference type="PROSITE" id="PS00122">
    <property type="entry name" value="CARBOXYLESTERASE_B_1"/>
    <property type="match status" value="1"/>
</dbReference>
<dbReference type="PROSITE" id="PS00941">
    <property type="entry name" value="CARBOXYLESTERASE_B_2"/>
    <property type="match status" value="1"/>
</dbReference>
<reference key="1">
    <citation type="journal article" date="1992" name="J. Bacteriol.">
        <title>Purification and properties of an Arthrobacter oxydans P52 carbamate hydrolase specific for the herbicide phenmedipham and nucleotide sequence of the corresponding gene.</title>
        <authorList>
            <person name="Pohlenz H.-D."/>
            <person name="Boidol W."/>
            <person name="Schuettke I."/>
            <person name="Streber W.R."/>
        </authorList>
    </citation>
    <scope>NUCLEOTIDE SEQUENCE [GENOMIC DNA]</scope>
    <scope>PROTEIN SEQUENCE OF 264-270; 272-281 AND 410-427</scope>
    <source>
        <strain>P52</strain>
    </source>
</reference>
<proteinExistence type="evidence at protein level"/>
<name>PCD_PSEOX</name>
<keyword id="KW-0903">Direct protein sequencing</keyword>
<keyword id="KW-0359">Herbicide resistance</keyword>
<keyword id="KW-0378">Hydrolase</keyword>
<keyword id="KW-0614">Plasmid</keyword>
<keyword id="KW-0719">Serine esterase</keyword>
<evidence type="ECO:0000250" key="1"/>
<evidence type="ECO:0000255" key="2">
    <source>
        <dbReference type="PROSITE-ProRule" id="PRU10039"/>
    </source>
</evidence>
<evidence type="ECO:0000305" key="3"/>